<comment type="function">
    <text evidence="1">Tetrapolymerization of the monopyrrole PBG into the hydroxymethylbilane pre-uroporphyrinogen in several discrete steps.</text>
</comment>
<comment type="catalytic activity">
    <reaction evidence="1">
        <text>4 porphobilinogen + H2O = hydroxymethylbilane + 4 NH4(+)</text>
        <dbReference type="Rhea" id="RHEA:13185"/>
        <dbReference type="ChEBI" id="CHEBI:15377"/>
        <dbReference type="ChEBI" id="CHEBI:28938"/>
        <dbReference type="ChEBI" id="CHEBI:57845"/>
        <dbReference type="ChEBI" id="CHEBI:58126"/>
        <dbReference type="EC" id="2.5.1.61"/>
    </reaction>
</comment>
<comment type="cofactor">
    <cofactor evidence="1">
        <name>dipyrromethane</name>
        <dbReference type="ChEBI" id="CHEBI:60342"/>
    </cofactor>
    <text evidence="1">Binds 1 dipyrromethane group covalently.</text>
</comment>
<comment type="pathway">
    <text evidence="1">Porphyrin-containing compound metabolism; protoporphyrin-IX biosynthesis; coproporphyrinogen-III from 5-aminolevulinate: step 2/4.</text>
</comment>
<comment type="subunit">
    <text evidence="1">Monomer.</text>
</comment>
<comment type="miscellaneous">
    <text evidence="1">The porphobilinogen subunits are added to the dipyrromethane group.</text>
</comment>
<comment type="similarity">
    <text evidence="1">Belongs to the HMBS family.</text>
</comment>
<protein>
    <recommendedName>
        <fullName evidence="1">Porphobilinogen deaminase</fullName>
        <shortName evidence="1">PBG</shortName>
        <ecNumber evidence="1">2.5.1.61</ecNumber>
    </recommendedName>
    <alternativeName>
        <fullName evidence="1">Hydroxymethylbilane synthase</fullName>
        <shortName evidence="1">HMBS</shortName>
    </alternativeName>
    <alternativeName>
        <fullName evidence="1">Pre-uroporphyrinogen synthase</fullName>
    </alternativeName>
</protein>
<reference key="1">
    <citation type="submission" date="2007-05" db="EMBL/GenBank/DDBJ databases">
        <title>Complete sequence of Pseudomonas putida F1.</title>
        <authorList>
            <consortium name="US DOE Joint Genome Institute"/>
            <person name="Copeland A."/>
            <person name="Lucas S."/>
            <person name="Lapidus A."/>
            <person name="Barry K."/>
            <person name="Detter J.C."/>
            <person name="Glavina del Rio T."/>
            <person name="Hammon N."/>
            <person name="Israni S."/>
            <person name="Dalin E."/>
            <person name="Tice H."/>
            <person name="Pitluck S."/>
            <person name="Chain P."/>
            <person name="Malfatti S."/>
            <person name="Shin M."/>
            <person name="Vergez L."/>
            <person name="Schmutz J."/>
            <person name="Larimer F."/>
            <person name="Land M."/>
            <person name="Hauser L."/>
            <person name="Kyrpides N."/>
            <person name="Lykidis A."/>
            <person name="Parales R."/>
            <person name="Richardson P."/>
        </authorList>
    </citation>
    <scope>NUCLEOTIDE SEQUENCE [LARGE SCALE GENOMIC DNA]</scope>
    <source>
        <strain>ATCC 700007 / DSM 6899 / JCM 31910 / BCRC 17059 / LMG 24140 / F1</strain>
    </source>
</reference>
<dbReference type="EC" id="2.5.1.61" evidence="1"/>
<dbReference type="EMBL" id="CP000712">
    <property type="protein sequence ID" value="ABQ76383.1"/>
    <property type="molecule type" value="Genomic_DNA"/>
</dbReference>
<dbReference type="SMR" id="A5VWX3"/>
<dbReference type="KEGG" id="ppf:Pput_0208"/>
<dbReference type="eggNOG" id="COG0181">
    <property type="taxonomic scope" value="Bacteria"/>
</dbReference>
<dbReference type="HOGENOM" id="CLU_019704_0_2_6"/>
<dbReference type="UniPathway" id="UPA00251">
    <property type="reaction ID" value="UER00319"/>
</dbReference>
<dbReference type="GO" id="GO:0005737">
    <property type="term" value="C:cytoplasm"/>
    <property type="evidence" value="ECO:0007669"/>
    <property type="project" value="TreeGrafter"/>
</dbReference>
<dbReference type="GO" id="GO:0004418">
    <property type="term" value="F:hydroxymethylbilane synthase activity"/>
    <property type="evidence" value="ECO:0007669"/>
    <property type="project" value="UniProtKB-UniRule"/>
</dbReference>
<dbReference type="GO" id="GO:0006782">
    <property type="term" value="P:protoporphyrinogen IX biosynthetic process"/>
    <property type="evidence" value="ECO:0007669"/>
    <property type="project" value="UniProtKB-UniRule"/>
</dbReference>
<dbReference type="CDD" id="cd13646">
    <property type="entry name" value="PBP2_EcHMBS_like"/>
    <property type="match status" value="1"/>
</dbReference>
<dbReference type="FunFam" id="3.30.160.40:FF:000002">
    <property type="entry name" value="Porphobilinogen deaminase"/>
    <property type="match status" value="1"/>
</dbReference>
<dbReference type="FunFam" id="3.40.190.10:FF:000004">
    <property type="entry name" value="Porphobilinogen deaminase"/>
    <property type="match status" value="1"/>
</dbReference>
<dbReference type="FunFam" id="3.40.190.10:FF:000005">
    <property type="entry name" value="Porphobilinogen deaminase"/>
    <property type="match status" value="1"/>
</dbReference>
<dbReference type="Gene3D" id="3.40.190.10">
    <property type="entry name" value="Periplasmic binding protein-like II"/>
    <property type="match status" value="2"/>
</dbReference>
<dbReference type="Gene3D" id="3.30.160.40">
    <property type="entry name" value="Porphobilinogen deaminase, C-terminal domain"/>
    <property type="match status" value="1"/>
</dbReference>
<dbReference type="HAMAP" id="MF_00260">
    <property type="entry name" value="Porphobil_deam"/>
    <property type="match status" value="1"/>
</dbReference>
<dbReference type="InterPro" id="IPR000860">
    <property type="entry name" value="HemC"/>
</dbReference>
<dbReference type="InterPro" id="IPR022419">
    <property type="entry name" value="Porphobilin_deaminase_cofac_BS"/>
</dbReference>
<dbReference type="InterPro" id="IPR022417">
    <property type="entry name" value="Porphobilin_deaminase_N"/>
</dbReference>
<dbReference type="InterPro" id="IPR022418">
    <property type="entry name" value="Porphobilinogen_deaminase_C"/>
</dbReference>
<dbReference type="InterPro" id="IPR036803">
    <property type="entry name" value="Porphobilinogen_deaminase_C_sf"/>
</dbReference>
<dbReference type="NCBIfam" id="TIGR00212">
    <property type="entry name" value="hemC"/>
    <property type="match status" value="1"/>
</dbReference>
<dbReference type="PANTHER" id="PTHR11557">
    <property type="entry name" value="PORPHOBILINOGEN DEAMINASE"/>
    <property type="match status" value="1"/>
</dbReference>
<dbReference type="PANTHER" id="PTHR11557:SF0">
    <property type="entry name" value="PORPHOBILINOGEN DEAMINASE"/>
    <property type="match status" value="1"/>
</dbReference>
<dbReference type="Pfam" id="PF01379">
    <property type="entry name" value="Porphobil_deam"/>
    <property type="match status" value="1"/>
</dbReference>
<dbReference type="Pfam" id="PF03900">
    <property type="entry name" value="Porphobil_deamC"/>
    <property type="match status" value="1"/>
</dbReference>
<dbReference type="PIRSF" id="PIRSF001438">
    <property type="entry name" value="4pyrrol_synth_OHMeBilane_synth"/>
    <property type="match status" value="1"/>
</dbReference>
<dbReference type="PRINTS" id="PR00151">
    <property type="entry name" value="PORPHBDMNASE"/>
</dbReference>
<dbReference type="SUPFAM" id="SSF53850">
    <property type="entry name" value="Periplasmic binding protein-like II"/>
    <property type="match status" value="1"/>
</dbReference>
<dbReference type="SUPFAM" id="SSF54782">
    <property type="entry name" value="Porphobilinogen deaminase (hydroxymethylbilane synthase), C-terminal domain"/>
    <property type="match status" value="1"/>
</dbReference>
<dbReference type="PROSITE" id="PS00533">
    <property type="entry name" value="PORPHOBILINOGEN_DEAM"/>
    <property type="match status" value="1"/>
</dbReference>
<feature type="chain" id="PRO_1000059105" description="Porphobilinogen deaminase">
    <location>
        <begin position="1"/>
        <end position="313"/>
    </location>
</feature>
<feature type="modified residue" description="S-(dipyrrolylmethanemethyl)cysteine" evidence="1">
    <location>
        <position position="242"/>
    </location>
</feature>
<keyword id="KW-0627">Porphyrin biosynthesis</keyword>
<keyword id="KW-0808">Transferase</keyword>
<evidence type="ECO:0000255" key="1">
    <source>
        <dbReference type="HAMAP-Rule" id="MF_00260"/>
    </source>
</evidence>
<name>HEM3_PSEP1</name>
<sequence length="313" mass="33470">MSTREIRIATRKSALALWQAEYVKARLEQAHTGLQVTLVPMVSRGDKLLDAPLAKIGGKGLFVKELETALLDNEADIAVHSMKDVPMDFPEGLGLYCICEREDPRDAFVSNTFDSLETLPAGSIVGTSSLRRQAQLLARRPDLQIRFLRGNVNTRLAKLDAGEYDAIILAAAGLIRLGFEDRITSTISVDDSLPAGGQGAVGIECRSADVEIHALLAPLHHVDTADRVIAERALNKRLNGGCQVPIACYAVLEGDQLWLRGLVGQPSGGTLLVADARAPRAAAEALGVQVAEDLLGQGAEAILKEVYGEAGHP</sequence>
<proteinExistence type="inferred from homology"/>
<organism>
    <name type="scientific">Pseudomonas putida (strain ATCC 700007 / DSM 6899 / JCM 31910 / BCRC 17059 / LMG 24140 / F1)</name>
    <dbReference type="NCBI Taxonomy" id="351746"/>
    <lineage>
        <taxon>Bacteria</taxon>
        <taxon>Pseudomonadati</taxon>
        <taxon>Pseudomonadota</taxon>
        <taxon>Gammaproteobacteria</taxon>
        <taxon>Pseudomonadales</taxon>
        <taxon>Pseudomonadaceae</taxon>
        <taxon>Pseudomonas</taxon>
    </lineage>
</organism>
<accession>A5VWX3</accession>
<gene>
    <name evidence="1" type="primary">hemC</name>
    <name type="ordered locus">Pput_0208</name>
</gene>